<dbReference type="EC" id="2.8.1.13" evidence="1"/>
<dbReference type="EMBL" id="CP000036">
    <property type="protein sequence ID" value="ABB66499.1"/>
    <property type="status" value="ALT_INIT"/>
    <property type="molecule type" value="Genomic_DNA"/>
</dbReference>
<dbReference type="RefSeq" id="WP_004984501.1">
    <property type="nucleotide sequence ID" value="NC_007613.1"/>
</dbReference>
<dbReference type="SMR" id="Q31ZK9"/>
<dbReference type="KEGG" id="sbo:SBO_1906"/>
<dbReference type="HOGENOM" id="CLU_035188_1_0_6"/>
<dbReference type="Proteomes" id="UP000007067">
    <property type="component" value="Chromosome"/>
</dbReference>
<dbReference type="GO" id="GO:0005737">
    <property type="term" value="C:cytoplasm"/>
    <property type="evidence" value="ECO:0007669"/>
    <property type="project" value="UniProtKB-SubCell"/>
</dbReference>
<dbReference type="GO" id="GO:0005524">
    <property type="term" value="F:ATP binding"/>
    <property type="evidence" value="ECO:0007669"/>
    <property type="project" value="UniProtKB-KW"/>
</dbReference>
<dbReference type="GO" id="GO:0000049">
    <property type="term" value="F:tRNA binding"/>
    <property type="evidence" value="ECO:0007669"/>
    <property type="project" value="UniProtKB-KW"/>
</dbReference>
<dbReference type="GO" id="GO:0103016">
    <property type="term" value="F:tRNA-uridine 2-sulfurtransferase activity"/>
    <property type="evidence" value="ECO:0007669"/>
    <property type="project" value="UniProtKB-EC"/>
</dbReference>
<dbReference type="GO" id="GO:0002143">
    <property type="term" value="P:tRNA wobble position uridine thiolation"/>
    <property type="evidence" value="ECO:0007669"/>
    <property type="project" value="TreeGrafter"/>
</dbReference>
<dbReference type="CDD" id="cd01998">
    <property type="entry name" value="MnmA_TRMU-like"/>
    <property type="match status" value="1"/>
</dbReference>
<dbReference type="FunFam" id="2.30.30.280:FF:000001">
    <property type="entry name" value="tRNA-specific 2-thiouridylase MnmA"/>
    <property type="match status" value="1"/>
</dbReference>
<dbReference type="FunFam" id="2.40.30.10:FF:000023">
    <property type="entry name" value="tRNA-specific 2-thiouridylase MnmA"/>
    <property type="match status" value="1"/>
</dbReference>
<dbReference type="FunFam" id="3.40.50.620:FF:000004">
    <property type="entry name" value="tRNA-specific 2-thiouridylase MnmA"/>
    <property type="match status" value="1"/>
</dbReference>
<dbReference type="Gene3D" id="2.30.30.280">
    <property type="entry name" value="Adenine nucleotide alpha hydrolases-like domains"/>
    <property type="match status" value="1"/>
</dbReference>
<dbReference type="Gene3D" id="3.40.50.620">
    <property type="entry name" value="HUPs"/>
    <property type="match status" value="1"/>
</dbReference>
<dbReference type="Gene3D" id="2.40.30.10">
    <property type="entry name" value="Translation factors"/>
    <property type="match status" value="1"/>
</dbReference>
<dbReference type="HAMAP" id="MF_00144">
    <property type="entry name" value="tRNA_thiouridyl_MnmA"/>
    <property type="match status" value="1"/>
</dbReference>
<dbReference type="InterPro" id="IPR004506">
    <property type="entry name" value="MnmA-like"/>
</dbReference>
<dbReference type="InterPro" id="IPR046885">
    <property type="entry name" value="MnmA-like_C"/>
</dbReference>
<dbReference type="InterPro" id="IPR046884">
    <property type="entry name" value="MnmA-like_central"/>
</dbReference>
<dbReference type="InterPro" id="IPR023382">
    <property type="entry name" value="MnmA-like_central_sf"/>
</dbReference>
<dbReference type="InterPro" id="IPR014729">
    <property type="entry name" value="Rossmann-like_a/b/a_fold"/>
</dbReference>
<dbReference type="NCBIfam" id="NF001138">
    <property type="entry name" value="PRK00143.1"/>
    <property type="match status" value="1"/>
</dbReference>
<dbReference type="NCBIfam" id="TIGR00420">
    <property type="entry name" value="trmU"/>
    <property type="match status" value="1"/>
</dbReference>
<dbReference type="PANTHER" id="PTHR11933:SF5">
    <property type="entry name" value="MITOCHONDRIAL TRNA-SPECIFIC 2-THIOURIDYLASE 1"/>
    <property type="match status" value="1"/>
</dbReference>
<dbReference type="PANTHER" id="PTHR11933">
    <property type="entry name" value="TRNA 5-METHYLAMINOMETHYL-2-THIOURIDYLATE -METHYLTRANSFERASE"/>
    <property type="match status" value="1"/>
</dbReference>
<dbReference type="Pfam" id="PF03054">
    <property type="entry name" value="tRNA_Me_trans"/>
    <property type="match status" value="1"/>
</dbReference>
<dbReference type="Pfam" id="PF20258">
    <property type="entry name" value="tRNA_Me_trans_C"/>
    <property type="match status" value="1"/>
</dbReference>
<dbReference type="Pfam" id="PF20259">
    <property type="entry name" value="tRNA_Me_trans_M"/>
    <property type="match status" value="1"/>
</dbReference>
<dbReference type="SUPFAM" id="SSF52402">
    <property type="entry name" value="Adenine nucleotide alpha hydrolases-like"/>
    <property type="match status" value="1"/>
</dbReference>
<feature type="chain" id="PRO_0000349796" description="tRNA-specific 2-thiouridylase MnmA">
    <location>
        <begin position="1"/>
        <end position="368"/>
    </location>
</feature>
<feature type="region of interest" description="Interaction with target base in tRNA" evidence="1">
    <location>
        <begin position="97"/>
        <end position="99"/>
    </location>
</feature>
<feature type="region of interest" description="Interaction with tRNA" evidence="1">
    <location>
        <begin position="149"/>
        <end position="151"/>
    </location>
</feature>
<feature type="region of interest" description="Interaction with tRNA" evidence="1">
    <location>
        <begin position="311"/>
        <end position="312"/>
    </location>
</feature>
<feature type="active site" description="Nucleophile" evidence="1">
    <location>
        <position position="102"/>
    </location>
</feature>
<feature type="active site" description="Cysteine persulfide intermediate" evidence="1">
    <location>
        <position position="199"/>
    </location>
</feature>
<feature type="binding site" evidence="1">
    <location>
        <begin position="11"/>
        <end position="18"/>
    </location>
    <ligand>
        <name>ATP</name>
        <dbReference type="ChEBI" id="CHEBI:30616"/>
    </ligand>
</feature>
<feature type="binding site" evidence="1">
    <location>
        <position position="37"/>
    </location>
    <ligand>
        <name>ATP</name>
        <dbReference type="ChEBI" id="CHEBI:30616"/>
    </ligand>
</feature>
<feature type="binding site" evidence="1">
    <location>
        <position position="127"/>
    </location>
    <ligand>
        <name>ATP</name>
        <dbReference type="ChEBI" id="CHEBI:30616"/>
    </ligand>
</feature>
<feature type="site" description="Interaction with tRNA" evidence="1">
    <location>
        <position position="128"/>
    </location>
</feature>
<feature type="site" description="Interaction with tRNA" evidence="1">
    <location>
        <position position="344"/>
    </location>
</feature>
<feature type="disulfide bond" description="Alternate" evidence="1">
    <location>
        <begin position="102"/>
        <end position="199"/>
    </location>
</feature>
<reference key="1">
    <citation type="journal article" date="2005" name="Nucleic Acids Res.">
        <title>Genome dynamics and diversity of Shigella species, the etiologic agents of bacillary dysentery.</title>
        <authorList>
            <person name="Yang F."/>
            <person name="Yang J."/>
            <person name="Zhang X."/>
            <person name="Chen L."/>
            <person name="Jiang Y."/>
            <person name="Yan Y."/>
            <person name="Tang X."/>
            <person name="Wang J."/>
            <person name="Xiong Z."/>
            <person name="Dong J."/>
            <person name="Xue Y."/>
            <person name="Zhu Y."/>
            <person name="Xu X."/>
            <person name="Sun L."/>
            <person name="Chen S."/>
            <person name="Nie H."/>
            <person name="Peng J."/>
            <person name="Xu J."/>
            <person name="Wang Y."/>
            <person name="Yuan Z."/>
            <person name="Wen Y."/>
            <person name="Yao Z."/>
            <person name="Shen Y."/>
            <person name="Qiang B."/>
            <person name="Hou Y."/>
            <person name="Yu J."/>
            <person name="Jin Q."/>
        </authorList>
    </citation>
    <scope>NUCLEOTIDE SEQUENCE [LARGE SCALE GENOMIC DNA]</scope>
    <source>
        <strain>Sb227</strain>
    </source>
</reference>
<name>MNMA_SHIBS</name>
<sequence>MSETAKKVIVGMSGGVDSSVSAWLLQQQGYQVEGLFMKNWEEDDGEEYCTAAADLADAQAVCDKLGIELHTVNFAAEYWDNVFELFLAEYKAGRTPNPDILCNKEIKFKAFLEFAAEDLGADYIATGHYVRRADVDGKSRLLRGLDSNKDQSYFLYTLSHEQIAQSLFPVGELEKPQVRKIAEDLGLVTAKKKDSTGICFIGERKFREFLGRYLPAQPGKIITVDGDEIGEHQGLMYHTLGQRKGLGIGGTKEGTEEPWYVVDKDVENNILVVAQGHEHPRLMSVGLIAQQLHWVDREPFTGTMRCSVKTRYRQTDIPCTVKALDDDRIEVIFDEPVAAVTPGQSAVFYNGEVCLGGGIIEQRLPLPV</sequence>
<comment type="function">
    <text evidence="1">Catalyzes the 2-thiolation of uridine at the wobble position (U34) of tRNA(Lys), tRNA(Glu) and tRNA(Gln), leading to the formation of s(2)U34, the first step of tRNA-mnm(5)s(2)U34 synthesis. Sulfur is provided by IscS, via a sulfur-relay system. Binds ATP and its substrate tRNAs.</text>
</comment>
<comment type="catalytic activity">
    <reaction evidence="1">
        <text>S-sulfanyl-L-cysteinyl-[protein] + uridine(34) in tRNA + AH2 + ATP = 2-thiouridine(34) in tRNA + L-cysteinyl-[protein] + A + AMP + diphosphate + H(+)</text>
        <dbReference type="Rhea" id="RHEA:47032"/>
        <dbReference type="Rhea" id="RHEA-COMP:10131"/>
        <dbReference type="Rhea" id="RHEA-COMP:11726"/>
        <dbReference type="Rhea" id="RHEA-COMP:11727"/>
        <dbReference type="Rhea" id="RHEA-COMP:11728"/>
        <dbReference type="ChEBI" id="CHEBI:13193"/>
        <dbReference type="ChEBI" id="CHEBI:15378"/>
        <dbReference type="ChEBI" id="CHEBI:17499"/>
        <dbReference type="ChEBI" id="CHEBI:29950"/>
        <dbReference type="ChEBI" id="CHEBI:30616"/>
        <dbReference type="ChEBI" id="CHEBI:33019"/>
        <dbReference type="ChEBI" id="CHEBI:61963"/>
        <dbReference type="ChEBI" id="CHEBI:65315"/>
        <dbReference type="ChEBI" id="CHEBI:87170"/>
        <dbReference type="ChEBI" id="CHEBI:456215"/>
        <dbReference type="EC" id="2.8.1.13"/>
    </reaction>
</comment>
<comment type="subunit">
    <text evidence="1">Interacts with TusE.</text>
</comment>
<comment type="subcellular location">
    <subcellularLocation>
        <location evidence="1">Cytoplasm</location>
    </subcellularLocation>
</comment>
<comment type="similarity">
    <text evidence="1">Belongs to the MnmA/TRMU family.</text>
</comment>
<comment type="sequence caution" evidence="2">
    <conflict type="erroneous initiation">
        <sequence resource="EMBL-CDS" id="ABB66499"/>
    </conflict>
</comment>
<gene>
    <name evidence="1" type="primary">mnmA</name>
    <name type="ordered locus">SBO_1906</name>
</gene>
<accession>Q31ZK9</accession>
<protein>
    <recommendedName>
        <fullName evidence="1">tRNA-specific 2-thiouridylase MnmA</fullName>
        <ecNumber evidence="1">2.8.1.13</ecNumber>
    </recommendedName>
</protein>
<evidence type="ECO:0000255" key="1">
    <source>
        <dbReference type="HAMAP-Rule" id="MF_00144"/>
    </source>
</evidence>
<evidence type="ECO:0000305" key="2"/>
<organism>
    <name type="scientific">Shigella boydii serotype 4 (strain Sb227)</name>
    <dbReference type="NCBI Taxonomy" id="300268"/>
    <lineage>
        <taxon>Bacteria</taxon>
        <taxon>Pseudomonadati</taxon>
        <taxon>Pseudomonadota</taxon>
        <taxon>Gammaproteobacteria</taxon>
        <taxon>Enterobacterales</taxon>
        <taxon>Enterobacteriaceae</taxon>
        <taxon>Shigella</taxon>
    </lineage>
</organism>
<keyword id="KW-0067">ATP-binding</keyword>
<keyword id="KW-0963">Cytoplasm</keyword>
<keyword id="KW-1015">Disulfide bond</keyword>
<keyword id="KW-0547">Nucleotide-binding</keyword>
<keyword id="KW-0694">RNA-binding</keyword>
<keyword id="KW-0808">Transferase</keyword>
<keyword id="KW-0819">tRNA processing</keyword>
<keyword id="KW-0820">tRNA-binding</keyword>
<proteinExistence type="inferred from homology"/>